<evidence type="ECO:0000255" key="1"/>
<evidence type="ECO:0000255" key="2">
    <source>
        <dbReference type="PROSITE-ProRule" id="PRU00176"/>
    </source>
</evidence>
<evidence type="ECO:0000256" key="3">
    <source>
        <dbReference type="SAM" id="MobiDB-lite"/>
    </source>
</evidence>
<evidence type="ECO:0000269" key="4">
    <source>
    </source>
</evidence>
<evidence type="ECO:0000305" key="5"/>
<comment type="subcellular location">
    <subcellularLocation>
        <location evidence="5">Nucleus</location>
    </subcellularLocation>
</comment>
<comment type="tissue specificity">
    <text evidence="4">Expressed in cauline leaves, stems, rosette leaves, immature siliques and primary inflorescences.</text>
</comment>
<comment type="domain">
    <text>Contains a PAM2-like motif, which seems to be involved in the binding to the PABC/CTC domain of PAB proteins.</text>
</comment>
<feature type="chain" id="PRO_0000428900" description="Polyadenylate-binding protein-interacting protein 10">
    <location>
        <begin position="1"/>
        <end position="353"/>
    </location>
</feature>
<feature type="domain" description="RRM 1" evidence="2">
    <location>
        <begin position="169"/>
        <end position="244"/>
    </location>
</feature>
<feature type="domain" description="RRM 2" evidence="2">
    <location>
        <begin position="266"/>
        <end position="341"/>
    </location>
</feature>
<feature type="region of interest" description="Disordered" evidence="3">
    <location>
        <begin position="1"/>
        <end position="61"/>
    </location>
</feature>
<feature type="region of interest" description="Disordered" evidence="3">
    <location>
        <begin position="128"/>
        <end position="159"/>
    </location>
</feature>
<feature type="short sequence motif" description="PAM2-like">
    <location>
        <begin position="96"/>
        <end position="106"/>
    </location>
</feature>
<feature type="short sequence motif" description="Bipartite nuclear localization signal" evidence="1">
    <location>
        <begin position="142"/>
        <end position="153"/>
    </location>
</feature>
<feature type="compositionally biased region" description="Low complexity" evidence="3">
    <location>
        <begin position="20"/>
        <end position="31"/>
    </location>
</feature>
<feature type="compositionally biased region" description="Basic residues" evidence="3">
    <location>
        <begin position="141"/>
        <end position="156"/>
    </location>
</feature>
<feature type="sequence conflict" description="In Ref. 3; BAF00782." evidence="5" ref="3">
    <original>L</original>
    <variation>P</variation>
    <location>
        <position position="289"/>
    </location>
</feature>
<organism>
    <name type="scientific">Arabidopsis thaliana</name>
    <name type="common">Mouse-ear cress</name>
    <dbReference type="NCBI Taxonomy" id="3702"/>
    <lineage>
        <taxon>Eukaryota</taxon>
        <taxon>Viridiplantae</taxon>
        <taxon>Streptophyta</taxon>
        <taxon>Embryophyta</taxon>
        <taxon>Tracheophyta</taxon>
        <taxon>Spermatophyta</taxon>
        <taxon>Magnoliopsida</taxon>
        <taxon>eudicotyledons</taxon>
        <taxon>Gunneridae</taxon>
        <taxon>Pentapetalae</taxon>
        <taxon>rosids</taxon>
        <taxon>malvids</taxon>
        <taxon>Brassicales</taxon>
        <taxon>Brassicaceae</taxon>
        <taxon>Camelineae</taxon>
        <taxon>Arabidopsis</taxon>
    </lineage>
</organism>
<sequence>MAVAENAGVKVDSSGQNLDNNNTAASATETTKPPCPDDDQSPKSDSSTPLTIDSTPETDDRINETAQKVQTLNGFSGNGERDNNGEIKDLADAFSKLNPMAQEFVPPSLARSQSGVLRNGLGFTNNFAAPPKLADGNDHFPRRRRSFGQGKRRMNKRTSLAQKDDVIRRTVYVSDIDQQVTEENLAGVFINCGQVVDCRVCGDPNSVLRFAFIEFTNEEGARAALSMSGTVLGFYPLKVLPSKTAIAPVNPTFLPRSEDEREMCVRTVYCTNIDKRITQIDLKGFFEMLCGEVHRLRLGDYHHQTRIAFVEFAMAESAIAALHCSGIVLGALPIRVSPSKTPVRPHFPRAEFK</sequence>
<reference key="1">
    <citation type="journal article" date="2000" name="Nature">
        <title>Sequence and analysis of chromosome 3 of the plant Arabidopsis thaliana.</title>
        <authorList>
            <person name="Salanoubat M."/>
            <person name="Lemcke K."/>
            <person name="Rieger M."/>
            <person name="Ansorge W."/>
            <person name="Unseld M."/>
            <person name="Fartmann B."/>
            <person name="Valle G."/>
            <person name="Bloecker H."/>
            <person name="Perez-Alonso M."/>
            <person name="Obermaier B."/>
            <person name="Delseny M."/>
            <person name="Boutry M."/>
            <person name="Grivell L.A."/>
            <person name="Mache R."/>
            <person name="Puigdomenech P."/>
            <person name="De Simone V."/>
            <person name="Choisne N."/>
            <person name="Artiguenave F."/>
            <person name="Robert C."/>
            <person name="Brottier P."/>
            <person name="Wincker P."/>
            <person name="Cattolico L."/>
            <person name="Weissenbach J."/>
            <person name="Saurin W."/>
            <person name="Quetier F."/>
            <person name="Schaefer M."/>
            <person name="Mueller-Auer S."/>
            <person name="Gabel C."/>
            <person name="Fuchs M."/>
            <person name="Benes V."/>
            <person name="Wurmbach E."/>
            <person name="Drzonek H."/>
            <person name="Erfle H."/>
            <person name="Jordan N."/>
            <person name="Bangert S."/>
            <person name="Wiedelmann R."/>
            <person name="Kranz H."/>
            <person name="Voss H."/>
            <person name="Holland R."/>
            <person name="Brandt P."/>
            <person name="Nyakatura G."/>
            <person name="Vezzi A."/>
            <person name="D'Angelo M."/>
            <person name="Pallavicini A."/>
            <person name="Toppo S."/>
            <person name="Simionati B."/>
            <person name="Conrad A."/>
            <person name="Hornischer K."/>
            <person name="Kauer G."/>
            <person name="Loehnert T.-H."/>
            <person name="Nordsiek G."/>
            <person name="Reichelt J."/>
            <person name="Scharfe M."/>
            <person name="Schoen O."/>
            <person name="Bargues M."/>
            <person name="Terol J."/>
            <person name="Climent J."/>
            <person name="Navarro P."/>
            <person name="Collado C."/>
            <person name="Perez-Perez A."/>
            <person name="Ottenwaelder B."/>
            <person name="Duchemin D."/>
            <person name="Cooke R."/>
            <person name="Laudie M."/>
            <person name="Berger-Llauro C."/>
            <person name="Purnelle B."/>
            <person name="Masuy D."/>
            <person name="de Haan M."/>
            <person name="Maarse A.C."/>
            <person name="Alcaraz J.-P."/>
            <person name="Cottet A."/>
            <person name="Casacuberta E."/>
            <person name="Monfort A."/>
            <person name="Argiriou A."/>
            <person name="Flores M."/>
            <person name="Liguori R."/>
            <person name="Vitale D."/>
            <person name="Mannhaupt G."/>
            <person name="Haase D."/>
            <person name="Schoof H."/>
            <person name="Rudd S."/>
            <person name="Zaccaria P."/>
            <person name="Mewes H.-W."/>
            <person name="Mayer K.F.X."/>
            <person name="Kaul S."/>
            <person name="Town C.D."/>
            <person name="Koo H.L."/>
            <person name="Tallon L.J."/>
            <person name="Jenkins J."/>
            <person name="Rooney T."/>
            <person name="Rizzo M."/>
            <person name="Walts A."/>
            <person name="Utterback T."/>
            <person name="Fujii C.Y."/>
            <person name="Shea T.P."/>
            <person name="Creasy T.H."/>
            <person name="Haas B."/>
            <person name="Maiti R."/>
            <person name="Wu D."/>
            <person name="Peterson J."/>
            <person name="Van Aken S."/>
            <person name="Pai G."/>
            <person name="Militscher J."/>
            <person name="Sellers P."/>
            <person name="Gill J.E."/>
            <person name="Feldblyum T.V."/>
            <person name="Preuss D."/>
            <person name="Lin X."/>
            <person name="Nierman W.C."/>
            <person name="Salzberg S.L."/>
            <person name="White O."/>
            <person name="Venter J.C."/>
            <person name="Fraser C.M."/>
            <person name="Kaneko T."/>
            <person name="Nakamura Y."/>
            <person name="Sato S."/>
            <person name="Kato T."/>
            <person name="Asamizu E."/>
            <person name="Sasamoto S."/>
            <person name="Kimura T."/>
            <person name="Idesawa K."/>
            <person name="Kawashima K."/>
            <person name="Kishida Y."/>
            <person name="Kiyokawa C."/>
            <person name="Kohara M."/>
            <person name="Matsumoto M."/>
            <person name="Matsuno A."/>
            <person name="Muraki A."/>
            <person name="Nakayama S."/>
            <person name="Nakazaki N."/>
            <person name="Shinpo S."/>
            <person name="Takeuchi C."/>
            <person name="Wada T."/>
            <person name="Watanabe A."/>
            <person name="Yamada M."/>
            <person name="Yasuda M."/>
            <person name="Tabata S."/>
        </authorList>
    </citation>
    <scope>NUCLEOTIDE SEQUENCE [LARGE SCALE GENOMIC DNA]</scope>
    <source>
        <strain>cv. Columbia</strain>
    </source>
</reference>
<reference key="2">
    <citation type="journal article" date="2017" name="Plant J.">
        <title>Araport11: a complete reannotation of the Arabidopsis thaliana reference genome.</title>
        <authorList>
            <person name="Cheng C.Y."/>
            <person name="Krishnakumar V."/>
            <person name="Chan A.P."/>
            <person name="Thibaud-Nissen F."/>
            <person name="Schobel S."/>
            <person name="Town C.D."/>
        </authorList>
    </citation>
    <scope>GENOME REANNOTATION</scope>
    <source>
        <strain>cv. Columbia</strain>
    </source>
</reference>
<reference key="3">
    <citation type="submission" date="2006-07" db="EMBL/GenBank/DDBJ databases">
        <title>Large-scale analysis of RIKEN Arabidopsis full-length (RAFL) cDNAs.</title>
        <authorList>
            <person name="Totoki Y."/>
            <person name="Seki M."/>
            <person name="Ishida J."/>
            <person name="Nakajima M."/>
            <person name="Enju A."/>
            <person name="Kamiya A."/>
            <person name="Narusaka M."/>
            <person name="Shin-i T."/>
            <person name="Nakagawa M."/>
            <person name="Sakamoto N."/>
            <person name="Oishi K."/>
            <person name="Kohara Y."/>
            <person name="Kobayashi M."/>
            <person name="Toyoda A."/>
            <person name="Sakaki Y."/>
            <person name="Sakurai T."/>
            <person name="Iida K."/>
            <person name="Akiyama K."/>
            <person name="Satou M."/>
            <person name="Toyoda T."/>
            <person name="Konagaya A."/>
            <person name="Carninci P."/>
            <person name="Kawai J."/>
            <person name="Hayashizaki Y."/>
            <person name="Shinozaki K."/>
        </authorList>
    </citation>
    <scope>NUCLEOTIDE SEQUENCE [LARGE SCALE MRNA]</scope>
    <source>
        <strain>cv. Columbia</strain>
    </source>
</reference>
<reference key="4">
    <citation type="journal article" date="2009" name="DNA Res.">
        <title>Analysis of multiple occurrences of alternative splicing events in Arabidopsis thaliana using novel sequenced full-length cDNAs.</title>
        <authorList>
            <person name="Iida K."/>
            <person name="Fukami-Kobayashi K."/>
            <person name="Toyoda A."/>
            <person name="Sakaki Y."/>
            <person name="Kobayashi M."/>
            <person name="Seki M."/>
            <person name="Shinozaki K."/>
        </authorList>
    </citation>
    <scope>NUCLEOTIDE SEQUENCE [LARGE SCALE MRNA]</scope>
    <source>
        <strain>cv. Columbia</strain>
        <tissue>Root</tissue>
    </source>
</reference>
<reference key="5">
    <citation type="journal article" date="2005" name="Mol. Genet. Genomics">
        <title>Four distinct classes of proteins as interaction partners of the PABC domain of Arabidopsis thaliana Poly(A)-binding proteins.</title>
        <authorList>
            <person name="Bravo J."/>
            <person name="Aguilar-Henonin L."/>
            <person name="Olmedo G."/>
            <person name="Guzman P."/>
        </authorList>
    </citation>
    <scope>GENE FAMILY</scope>
    <scope>PAM2 MOTIF</scope>
    <scope>TISSUE SPECIFICITY</scope>
</reference>
<proteinExistence type="evidence at transcript level"/>
<protein>
    <recommendedName>
        <fullName>Polyadenylate-binding protein-interacting protein 10</fullName>
        <shortName>PABP-interacting protein 10</shortName>
        <shortName>Poly(A)-binding protein-interacting protein 10</shortName>
    </recommendedName>
    <alternativeName>
        <fullName>PAM2-containing protein CID10</fullName>
    </alternativeName>
    <alternativeName>
        <fullName>Protein CTC-INTERACTING DOMAIN 10</fullName>
    </alternativeName>
</protein>
<keyword id="KW-0539">Nucleus</keyword>
<keyword id="KW-1185">Reference proteome</keyword>
<keyword id="KW-0677">Repeat</keyword>
<keyword id="KW-0694">RNA-binding</keyword>
<dbReference type="EMBL" id="AC012329">
    <property type="protein sequence ID" value="AAG52182.1"/>
    <property type="molecule type" value="Genomic_DNA"/>
</dbReference>
<dbReference type="EMBL" id="AL132956">
    <property type="protein sequence ID" value="CAB66418.1"/>
    <property type="molecule type" value="Genomic_DNA"/>
</dbReference>
<dbReference type="EMBL" id="CP002686">
    <property type="protein sequence ID" value="AEE78535.1"/>
    <property type="molecule type" value="Genomic_DNA"/>
</dbReference>
<dbReference type="EMBL" id="CP002686">
    <property type="protein sequence ID" value="AEE78536.1"/>
    <property type="molecule type" value="Genomic_DNA"/>
</dbReference>
<dbReference type="EMBL" id="CP002686">
    <property type="protein sequence ID" value="ANM63369.1"/>
    <property type="molecule type" value="Genomic_DNA"/>
</dbReference>
<dbReference type="EMBL" id="AK228892">
    <property type="protein sequence ID" value="BAF00782.1"/>
    <property type="molecule type" value="mRNA"/>
</dbReference>
<dbReference type="EMBL" id="AK317338">
    <property type="protein sequence ID" value="BAH20012.1"/>
    <property type="molecule type" value="mRNA"/>
</dbReference>
<dbReference type="PIR" id="T45844">
    <property type="entry name" value="T45844"/>
</dbReference>
<dbReference type="RefSeq" id="NP_001030833.1">
    <property type="nucleotide sequence ID" value="NM_001035756.2"/>
</dbReference>
<dbReference type="RefSeq" id="NP_001325461.1">
    <property type="nucleotide sequence ID" value="NM_001339409.1"/>
</dbReference>
<dbReference type="RefSeq" id="NP_190508.1">
    <property type="nucleotide sequence ID" value="NM_114799.4"/>
</dbReference>
<dbReference type="SMR" id="Q9SG10"/>
<dbReference type="FunCoup" id="Q9SG10">
    <property type="interactions" value="390"/>
</dbReference>
<dbReference type="STRING" id="3702.Q9SG10"/>
<dbReference type="iPTMnet" id="Q9SG10"/>
<dbReference type="PaxDb" id="3702-AT3G49390.2"/>
<dbReference type="ProteomicsDB" id="246938"/>
<dbReference type="EnsemblPlants" id="AT3G49390.1">
    <property type="protein sequence ID" value="AT3G49390.1"/>
    <property type="gene ID" value="AT3G49390"/>
</dbReference>
<dbReference type="EnsemblPlants" id="AT3G49390.2">
    <property type="protein sequence ID" value="AT3G49390.2"/>
    <property type="gene ID" value="AT3G49390"/>
</dbReference>
<dbReference type="EnsemblPlants" id="AT3G49390.3">
    <property type="protein sequence ID" value="AT3G49390.3"/>
    <property type="gene ID" value="AT3G49390"/>
</dbReference>
<dbReference type="GeneID" id="824101"/>
<dbReference type="Gramene" id="AT3G49390.1">
    <property type="protein sequence ID" value="AT3G49390.1"/>
    <property type="gene ID" value="AT3G49390"/>
</dbReference>
<dbReference type="Gramene" id="AT3G49390.2">
    <property type="protein sequence ID" value="AT3G49390.2"/>
    <property type="gene ID" value="AT3G49390"/>
</dbReference>
<dbReference type="Gramene" id="AT3G49390.3">
    <property type="protein sequence ID" value="AT3G49390.3"/>
    <property type="gene ID" value="AT3G49390"/>
</dbReference>
<dbReference type="KEGG" id="ath:AT3G49390"/>
<dbReference type="Araport" id="AT3G49390"/>
<dbReference type="TAIR" id="AT3G49390">
    <property type="gene designation" value="CID10"/>
</dbReference>
<dbReference type="eggNOG" id="KOG0118">
    <property type="taxonomic scope" value="Eukaryota"/>
</dbReference>
<dbReference type="HOGENOM" id="CLU_042473_2_1_1"/>
<dbReference type="InParanoid" id="Q9SG10"/>
<dbReference type="OMA" id="VFINCGQ"/>
<dbReference type="OrthoDB" id="7763451at2759"/>
<dbReference type="PhylomeDB" id="Q9SG10"/>
<dbReference type="PRO" id="PR:Q9SG10"/>
<dbReference type="Proteomes" id="UP000006548">
    <property type="component" value="Chromosome 3"/>
</dbReference>
<dbReference type="ExpressionAtlas" id="Q9SG10">
    <property type="expression patterns" value="baseline and differential"/>
</dbReference>
<dbReference type="GO" id="GO:0005634">
    <property type="term" value="C:nucleus"/>
    <property type="evidence" value="ECO:0007669"/>
    <property type="project" value="UniProtKB-SubCell"/>
</dbReference>
<dbReference type="GO" id="GO:0003729">
    <property type="term" value="F:mRNA binding"/>
    <property type="evidence" value="ECO:0000314"/>
    <property type="project" value="TAIR"/>
</dbReference>
<dbReference type="CDD" id="cd12459">
    <property type="entry name" value="RRM1_CID8_like"/>
    <property type="match status" value="1"/>
</dbReference>
<dbReference type="CDD" id="cd12460">
    <property type="entry name" value="RRM2_CID8_like"/>
    <property type="match status" value="1"/>
</dbReference>
<dbReference type="FunFam" id="3.30.70.330:FF:000665">
    <property type="entry name" value="Polyadenylate-binding protein-interacting protein 10"/>
    <property type="match status" value="1"/>
</dbReference>
<dbReference type="FunFam" id="3.30.70.330:FF:000530">
    <property type="entry name" value="Polyadenylate-binding protein-interacting protein 11"/>
    <property type="match status" value="1"/>
</dbReference>
<dbReference type="Gene3D" id="3.30.70.330">
    <property type="match status" value="2"/>
</dbReference>
<dbReference type="InterPro" id="IPR034823">
    <property type="entry name" value="CID8-like_RRM1"/>
</dbReference>
<dbReference type="InterPro" id="IPR034825">
    <property type="entry name" value="CID8-like_RRM2"/>
</dbReference>
<dbReference type="InterPro" id="IPR012677">
    <property type="entry name" value="Nucleotide-bd_a/b_plait_sf"/>
</dbReference>
<dbReference type="InterPro" id="IPR009818">
    <property type="entry name" value="PAM2_motif"/>
</dbReference>
<dbReference type="InterPro" id="IPR035979">
    <property type="entry name" value="RBD_domain_sf"/>
</dbReference>
<dbReference type="InterPro" id="IPR000504">
    <property type="entry name" value="RRM_dom"/>
</dbReference>
<dbReference type="PANTHER" id="PTHR32343:SF24">
    <property type="entry name" value="POLYADENYLATE-BINDING PROTEIN-INTERACTING PROTEIN 10"/>
    <property type="match status" value="1"/>
</dbReference>
<dbReference type="PANTHER" id="PTHR32343">
    <property type="entry name" value="SERINE/ARGININE-RICH SPLICING FACTOR"/>
    <property type="match status" value="1"/>
</dbReference>
<dbReference type="Pfam" id="PF07145">
    <property type="entry name" value="PAM2"/>
    <property type="match status" value="1"/>
</dbReference>
<dbReference type="Pfam" id="PF00076">
    <property type="entry name" value="RRM_1"/>
    <property type="match status" value="2"/>
</dbReference>
<dbReference type="SMART" id="SM00360">
    <property type="entry name" value="RRM"/>
    <property type="match status" value="2"/>
</dbReference>
<dbReference type="SUPFAM" id="SSF54928">
    <property type="entry name" value="RNA-binding domain, RBD"/>
    <property type="match status" value="2"/>
</dbReference>
<dbReference type="PROSITE" id="PS50102">
    <property type="entry name" value="RRM"/>
    <property type="match status" value="2"/>
</dbReference>
<name>CID10_ARATH</name>
<gene>
    <name type="primary">CID10</name>
    <name type="ordered locus">At3g49390</name>
    <name type="ORF">F2K15.250</name>
    <name type="ORF">T1G12.9</name>
</gene>
<accession>Q9SG10</accession>
<accession>Q0WQ17</accession>